<organism>
    <name type="scientific">Bacillus cereus (strain ZK / E33L)</name>
    <dbReference type="NCBI Taxonomy" id="288681"/>
    <lineage>
        <taxon>Bacteria</taxon>
        <taxon>Bacillati</taxon>
        <taxon>Bacillota</taxon>
        <taxon>Bacilli</taxon>
        <taxon>Bacillales</taxon>
        <taxon>Bacillaceae</taxon>
        <taxon>Bacillus</taxon>
        <taxon>Bacillus cereus group</taxon>
    </lineage>
</organism>
<accession>Q63E65</accession>
<dbReference type="EMBL" id="CP000001">
    <property type="protein sequence ID" value="AAU19048.1"/>
    <property type="molecule type" value="Genomic_DNA"/>
</dbReference>
<dbReference type="RefSeq" id="WP_000147197.1">
    <property type="nucleotide sequence ID" value="NZ_CP009968.1"/>
</dbReference>
<dbReference type="SMR" id="Q63E65"/>
<dbReference type="KEGG" id="bcz:BCE33L1198"/>
<dbReference type="PATRIC" id="fig|288681.22.peg.4364"/>
<dbReference type="Proteomes" id="UP000002612">
    <property type="component" value="Chromosome"/>
</dbReference>
<dbReference type="GO" id="GO:0006089">
    <property type="term" value="P:lactate metabolic process"/>
    <property type="evidence" value="ECO:0007669"/>
    <property type="project" value="UniProtKB-UniRule"/>
</dbReference>
<dbReference type="Gene3D" id="3.40.50.10420">
    <property type="entry name" value="NagB/RpiA/CoA transferase-like"/>
    <property type="match status" value="1"/>
</dbReference>
<dbReference type="HAMAP" id="MF_02104">
    <property type="entry name" value="LutC"/>
    <property type="match status" value="1"/>
</dbReference>
<dbReference type="InterPro" id="IPR024185">
    <property type="entry name" value="FTHF_cligase-like_sf"/>
</dbReference>
<dbReference type="InterPro" id="IPR003741">
    <property type="entry name" value="LUD_dom"/>
</dbReference>
<dbReference type="InterPro" id="IPR022823">
    <property type="entry name" value="LutC"/>
</dbReference>
<dbReference type="InterPro" id="IPR037171">
    <property type="entry name" value="NagB/RpiA_transferase-like"/>
</dbReference>
<dbReference type="PANTHER" id="PTHR43682">
    <property type="entry name" value="LACTATE UTILIZATION PROTEIN C"/>
    <property type="match status" value="1"/>
</dbReference>
<dbReference type="PANTHER" id="PTHR43682:SF1">
    <property type="entry name" value="LACTATE UTILIZATION PROTEIN C"/>
    <property type="match status" value="1"/>
</dbReference>
<dbReference type="Pfam" id="PF02589">
    <property type="entry name" value="LUD_dom"/>
    <property type="match status" value="1"/>
</dbReference>
<dbReference type="SUPFAM" id="SSF100950">
    <property type="entry name" value="NagB/RpiA/CoA transferase-like"/>
    <property type="match status" value="1"/>
</dbReference>
<reference key="1">
    <citation type="journal article" date="2006" name="J. Bacteriol.">
        <title>Pathogenomic sequence analysis of Bacillus cereus and Bacillus thuringiensis isolates closely related to Bacillus anthracis.</title>
        <authorList>
            <person name="Han C.S."/>
            <person name="Xie G."/>
            <person name="Challacombe J.F."/>
            <person name="Altherr M.R."/>
            <person name="Bhotika S.S."/>
            <person name="Bruce D."/>
            <person name="Campbell C.S."/>
            <person name="Campbell M.L."/>
            <person name="Chen J."/>
            <person name="Chertkov O."/>
            <person name="Cleland C."/>
            <person name="Dimitrijevic M."/>
            <person name="Doggett N.A."/>
            <person name="Fawcett J.J."/>
            <person name="Glavina T."/>
            <person name="Goodwin L.A."/>
            <person name="Hill K.K."/>
            <person name="Hitchcock P."/>
            <person name="Jackson P.J."/>
            <person name="Keim P."/>
            <person name="Kewalramani A.R."/>
            <person name="Longmire J."/>
            <person name="Lucas S."/>
            <person name="Malfatti S."/>
            <person name="McMurry K."/>
            <person name="Meincke L.J."/>
            <person name="Misra M."/>
            <person name="Moseman B.L."/>
            <person name="Mundt M."/>
            <person name="Munk A.C."/>
            <person name="Okinaka R.T."/>
            <person name="Parson-Quintana B."/>
            <person name="Reilly L.P."/>
            <person name="Richardson P."/>
            <person name="Robinson D.L."/>
            <person name="Rubin E."/>
            <person name="Saunders E."/>
            <person name="Tapia R."/>
            <person name="Tesmer J.G."/>
            <person name="Thayer N."/>
            <person name="Thompson L.S."/>
            <person name="Tice H."/>
            <person name="Ticknor L.O."/>
            <person name="Wills P.L."/>
            <person name="Brettin T.S."/>
            <person name="Gilna P."/>
        </authorList>
    </citation>
    <scope>NUCLEOTIDE SEQUENCE [LARGE SCALE GENOMIC DNA]</scope>
    <source>
        <strain>ZK / E33L</strain>
    </source>
</reference>
<proteinExistence type="inferred from homology"/>
<comment type="function">
    <text evidence="1">Is involved in L-lactate degradation and allows cells to grow with lactate as the sole carbon source.</text>
</comment>
<comment type="similarity">
    <text evidence="1">Belongs to the LutC/YkgG family.</text>
</comment>
<sequence length="236" mass="26599">MTGLIQNRDSFLDNIAKELGRTRKTDGVERPVWKNNVNKETLKDYSQEELLEVFKNQCTNIHTTVVETTNDRLREDIQKVIVENGGGPIMLSADERFDSYGLTSLFKEELPKQNVEVNVWDPEKKEENMRIAERANIGIAFSDYTLAESGTIVVQSHKGQGRSLHFLPTVYFAIIPRETLVPRITQAVQDMNTRVENGEEVASCINFITGPSNSADIEMNLVVGVHGPLKAVYFIV</sequence>
<name>LUTC_BACCZ</name>
<protein>
    <recommendedName>
        <fullName evidence="1">Lactate utilization protein C</fullName>
    </recommendedName>
</protein>
<gene>
    <name evidence="1" type="primary">lutC</name>
    <name type="ordered locus">BCE33L1198</name>
</gene>
<feature type="chain" id="PRO_0000384002" description="Lactate utilization protein C">
    <location>
        <begin position="1"/>
        <end position="236"/>
    </location>
</feature>
<evidence type="ECO:0000255" key="1">
    <source>
        <dbReference type="HAMAP-Rule" id="MF_02104"/>
    </source>
</evidence>